<dbReference type="EC" id="2.7.7.8" evidence="1"/>
<dbReference type="EMBL" id="AE006914">
    <property type="protein sequence ID" value="AAL03201.1"/>
    <property type="molecule type" value="Genomic_DNA"/>
</dbReference>
<dbReference type="PIR" id="G97782">
    <property type="entry name" value="G97782"/>
</dbReference>
<dbReference type="RefSeq" id="WP_010977288.1">
    <property type="nucleotide sequence ID" value="NC_003103.1"/>
</dbReference>
<dbReference type="SMR" id="Q92HV7"/>
<dbReference type="GeneID" id="927740"/>
<dbReference type="KEGG" id="rco:RC0663"/>
<dbReference type="PATRIC" id="fig|272944.4.peg.756"/>
<dbReference type="HOGENOM" id="CLU_004217_2_2_5"/>
<dbReference type="Proteomes" id="UP000000816">
    <property type="component" value="Chromosome"/>
</dbReference>
<dbReference type="GO" id="GO:0005829">
    <property type="term" value="C:cytosol"/>
    <property type="evidence" value="ECO:0007669"/>
    <property type="project" value="TreeGrafter"/>
</dbReference>
<dbReference type="GO" id="GO:0000175">
    <property type="term" value="F:3'-5'-RNA exonuclease activity"/>
    <property type="evidence" value="ECO:0007669"/>
    <property type="project" value="TreeGrafter"/>
</dbReference>
<dbReference type="GO" id="GO:0000287">
    <property type="term" value="F:magnesium ion binding"/>
    <property type="evidence" value="ECO:0007669"/>
    <property type="project" value="UniProtKB-UniRule"/>
</dbReference>
<dbReference type="GO" id="GO:0004654">
    <property type="term" value="F:polyribonucleotide nucleotidyltransferase activity"/>
    <property type="evidence" value="ECO:0007669"/>
    <property type="project" value="UniProtKB-UniRule"/>
</dbReference>
<dbReference type="GO" id="GO:0003723">
    <property type="term" value="F:RNA binding"/>
    <property type="evidence" value="ECO:0007669"/>
    <property type="project" value="UniProtKB-UniRule"/>
</dbReference>
<dbReference type="GO" id="GO:0006402">
    <property type="term" value="P:mRNA catabolic process"/>
    <property type="evidence" value="ECO:0007669"/>
    <property type="project" value="UniProtKB-UniRule"/>
</dbReference>
<dbReference type="GO" id="GO:0006396">
    <property type="term" value="P:RNA processing"/>
    <property type="evidence" value="ECO:0007669"/>
    <property type="project" value="InterPro"/>
</dbReference>
<dbReference type="CDD" id="cd02393">
    <property type="entry name" value="KH-I_PNPase"/>
    <property type="match status" value="1"/>
</dbReference>
<dbReference type="CDD" id="cd11363">
    <property type="entry name" value="RNase_PH_PNPase_1"/>
    <property type="match status" value="1"/>
</dbReference>
<dbReference type="CDD" id="cd11364">
    <property type="entry name" value="RNase_PH_PNPase_2"/>
    <property type="match status" value="1"/>
</dbReference>
<dbReference type="FunFam" id="3.30.1370.10:FF:000001">
    <property type="entry name" value="Polyribonucleotide nucleotidyltransferase"/>
    <property type="match status" value="1"/>
</dbReference>
<dbReference type="FunFam" id="3.30.230.70:FF:000001">
    <property type="entry name" value="Polyribonucleotide nucleotidyltransferase"/>
    <property type="match status" value="1"/>
</dbReference>
<dbReference type="FunFam" id="3.30.230.70:FF:000002">
    <property type="entry name" value="Polyribonucleotide nucleotidyltransferase"/>
    <property type="match status" value="1"/>
</dbReference>
<dbReference type="FunFam" id="2.40.50.140:FF:000189">
    <property type="entry name" value="Polyribonucleotide nucleotidyltransferase, putative"/>
    <property type="match status" value="1"/>
</dbReference>
<dbReference type="Gene3D" id="3.30.230.70">
    <property type="entry name" value="GHMP Kinase, N-terminal domain"/>
    <property type="match status" value="2"/>
</dbReference>
<dbReference type="Gene3D" id="3.30.1370.10">
    <property type="entry name" value="K Homology domain, type 1"/>
    <property type="match status" value="1"/>
</dbReference>
<dbReference type="Gene3D" id="2.40.50.140">
    <property type="entry name" value="Nucleic acid-binding proteins"/>
    <property type="match status" value="1"/>
</dbReference>
<dbReference type="HAMAP" id="MF_01595">
    <property type="entry name" value="PNPase"/>
    <property type="match status" value="1"/>
</dbReference>
<dbReference type="InterPro" id="IPR001247">
    <property type="entry name" value="ExoRNase_PH_dom1"/>
</dbReference>
<dbReference type="InterPro" id="IPR015847">
    <property type="entry name" value="ExoRNase_PH_dom2"/>
</dbReference>
<dbReference type="InterPro" id="IPR036345">
    <property type="entry name" value="ExoRNase_PH_dom2_sf"/>
</dbReference>
<dbReference type="InterPro" id="IPR004087">
    <property type="entry name" value="KH_dom"/>
</dbReference>
<dbReference type="InterPro" id="IPR004088">
    <property type="entry name" value="KH_dom_type_1"/>
</dbReference>
<dbReference type="InterPro" id="IPR036612">
    <property type="entry name" value="KH_dom_type_1_sf"/>
</dbReference>
<dbReference type="InterPro" id="IPR012340">
    <property type="entry name" value="NA-bd_OB-fold"/>
</dbReference>
<dbReference type="InterPro" id="IPR012162">
    <property type="entry name" value="PNPase"/>
</dbReference>
<dbReference type="InterPro" id="IPR027408">
    <property type="entry name" value="PNPase/RNase_PH_dom_sf"/>
</dbReference>
<dbReference type="InterPro" id="IPR015848">
    <property type="entry name" value="PNPase_PH_RNA-bd_bac/org-type"/>
</dbReference>
<dbReference type="InterPro" id="IPR036456">
    <property type="entry name" value="PNPase_PH_RNA-bd_sf"/>
</dbReference>
<dbReference type="InterPro" id="IPR020568">
    <property type="entry name" value="Ribosomal_Su5_D2-typ_SF"/>
</dbReference>
<dbReference type="InterPro" id="IPR003029">
    <property type="entry name" value="S1_domain"/>
</dbReference>
<dbReference type="NCBIfam" id="TIGR03591">
    <property type="entry name" value="polynuc_phos"/>
    <property type="match status" value="1"/>
</dbReference>
<dbReference type="NCBIfam" id="NF008805">
    <property type="entry name" value="PRK11824.1"/>
    <property type="match status" value="1"/>
</dbReference>
<dbReference type="PANTHER" id="PTHR11252">
    <property type="entry name" value="POLYRIBONUCLEOTIDE NUCLEOTIDYLTRANSFERASE"/>
    <property type="match status" value="1"/>
</dbReference>
<dbReference type="PANTHER" id="PTHR11252:SF0">
    <property type="entry name" value="POLYRIBONUCLEOTIDE NUCLEOTIDYLTRANSFERASE 1, MITOCHONDRIAL"/>
    <property type="match status" value="1"/>
</dbReference>
<dbReference type="Pfam" id="PF00013">
    <property type="entry name" value="KH_1"/>
    <property type="match status" value="1"/>
</dbReference>
<dbReference type="Pfam" id="PF03726">
    <property type="entry name" value="PNPase"/>
    <property type="match status" value="1"/>
</dbReference>
<dbReference type="Pfam" id="PF01138">
    <property type="entry name" value="RNase_PH"/>
    <property type="match status" value="2"/>
</dbReference>
<dbReference type="Pfam" id="PF03725">
    <property type="entry name" value="RNase_PH_C"/>
    <property type="match status" value="1"/>
</dbReference>
<dbReference type="Pfam" id="PF00575">
    <property type="entry name" value="S1"/>
    <property type="match status" value="1"/>
</dbReference>
<dbReference type="PIRSF" id="PIRSF005499">
    <property type="entry name" value="PNPase"/>
    <property type="match status" value="1"/>
</dbReference>
<dbReference type="SMART" id="SM00322">
    <property type="entry name" value="KH"/>
    <property type="match status" value="1"/>
</dbReference>
<dbReference type="SMART" id="SM00316">
    <property type="entry name" value="S1"/>
    <property type="match status" value="1"/>
</dbReference>
<dbReference type="SUPFAM" id="SSF54791">
    <property type="entry name" value="Eukaryotic type KH-domain (KH-domain type I)"/>
    <property type="match status" value="1"/>
</dbReference>
<dbReference type="SUPFAM" id="SSF50249">
    <property type="entry name" value="Nucleic acid-binding proteins"/>
    <property type="match status" value="1"/>
</dbReference>
<dbReference type="SUPFAM" id="SSF46915">
    <property type="entry name" value="Polynucleotide phosphorylase/guanosine pentaphosphate synthase (PNPase/GPSI), domain 3"/>
    <property type="match status" value="1"/>
</dbReference>
<dbReference type="SUPFAM" id="SSF55666">
    <property type="entry name" value="Ribonuclease PH domain 2-like"/>
    <property type="match status" value="2"/>
</dbReference>
<dbReference type="SUPFAM" id="SSF54211">
    <property type="entry name" value="Ribosomal protein S5 domain 2-like"/>
    <property type="match status" value="2"/>
</dbReference>
<dbReference type="PROSITE" id="PS50084">
    <property type="entry name" value="KH_TYPE_1"/>
    <property type="match status" value="1"/>
</dbReference>
<dbReference type="PROSITE" id="PS50126">
    <property type="entry name" value="S1"/>
    <property type="match status" value="1"/>
</dbReference>
<accession>Q92HV7</accession>
<organism>
    <name type="scientific">Rickettsia conorii (strain ATCC VR-613 / Malish 7)</name>
    <dbReference type="NCBI Taxonomy" id="272944"/>
    <lineage>
        <taxon>Bacteria</taxon>
        <taxon>Pseudomonadati</taxon>
        <taxon>Pseudomonadota</taxon>
        <taxon>Alphaproteobacteria</taxon>
        <taxon>Rickettsiales</taxon>
        <taxon>Rickettsiaceae</taxon>
        <taxon>Rickettsieae</taxon>
        <taxon>Rickettsia</taxon>
        <taxon>spotted fever group</taxon>
    </lineage>
</organism>
<name>PNP_RICCN</name>
<keyword id="KW-0963">Cytoplasm</keyword>
<keyword id="KW-0460">Magnesium</keyword>
<keyword id="KW-0479">Metal-binding</keyword>
<keyword id="KW-0548">Nucleotidyltransferase</keyword>
<keyword id="KW-0694">RNA-binding</keyword>
<keyword id="KW-0808">Transferase</keyword>
<comment type="function">
    <text evidence="1">Involved in mRNA degradation. Catalyzes the phosphorolysis of single-stranded polyribonucleotides processively in the 3'- to 5'-direction.</text>
</comment>
<comment type="catalytic activity">
    <reaction evidence="1">
        <text>RNA(n+1) + phosphate = RNA(n) + a ribonucleoside 5'-diphosphate</text>
        <dbReference type="Rhea" id="RHEA:22096"/>
        <dbReference type="Rhea" id="RHEA-COMP:14527"/>
        <dbReference type="Rhea" id="RHEA-COMP:17342"/>
        <dbReference type="ChEBI" id="CHEBI:43474"/>
        <dbReference type="ChEBI" id="CHEBI:57930"/>
        <dbReference type="ChEBI" id="CHEBI:140395"/>
        <dbReference type="EC" id="2.7.7.8"/>
    </reaction>
</comment>
<comment type="cofactor">
    <cofactor evidence="1">
        <name>Mg(2+)</name>
        <dbReference type="ChEBI" id="CHEBI:18420"/>
    </cofactor>
</comment>
<comment type="subcellular location">
    <subcellularLocation>
        <location evidence="1">Cytoplasm</location>
    </subcellularLocation>
</comment>
<comment type="similarity">
    <text evidence="1">Belongs to the polyribonucleotide nucleotidyltransferase family.</text>
</comment>
<reference key="1">
    <citation type="journal article" date="2001" name="Science">
        <title>Mechanisms of evolution in Rickettsia conorii and R. prowazekii.</title>
        <authorList>
            <person name="Ogata H."/>
            <person name="Audic S."/>
            <person name="Renesto-Audiffren P."/>
            <person name="Fournier P.-E."/>
            <person name="Barbe V."/>
            <person name="Samson D."/>
            <person name="Roux V."/>
            <person name="Cossart P."/>
            <person name="Weissenbach J."/>
            <person name="Claverie J.-M."/>
            <person name="Raoult D."/>
        </authorList>
    </citation>
    <scope>NUCLEOTIDE SEQUENCE [LARGE SCALE GENOMIC DNA]</scope>
    <source>
        <strain>ATCC VR-613 / Malish 7</strain>
    </source>
</reference>
<feature type="chain" id="PRO_0000289281" description="Polyribonucleotide nucleotidyltransferase">
    <location>
        <begin position="1"/>
        <end position="749"/>
    </location>
</feature>
<feature type="domain" description="KH" evidence="1">
    <location>
        <begin position="554"/>
        <end position="613"/>
    </location>
</feature>
<feature type="domain" description="S1 motif" evidence="1">
    <location>
        <begin position="623"/>
        <end position="691"/>
    </location>
</feature>
<feature type="region of interest" description="Disordered" evidence="2">
    <location>
        <begin position="691"/>
        <end position="749"/>
    </location>
</feature>
<feature type="compositionally biased region" description="Low complexity" evidence="2">
    <location>
        <begin position="699"/>
        <end position="713"/>
    </location>
</feature>
<feature type="compositionally biased region" description="Basic and acidic residues" evidence="2">
    <location>
        <begin position="714"/>
        <end position="723"/>
    </location>
</feature>
<feature type="binding site" evidence="1">
    <location>
        <position position="487"/>
    </location>
    <ligand>
        <name>Mg(2+)</name>
        <dbReference type="ChEBI" id="CHEBI:18420"/>
    </ligand>
</feature>
<feature type="binding site" evidence="1">
    <location>
        <position position="493"/>
    </location>
    <ligand>
        <name>Mg(2+)</name>
        <dbReference type="ChEBI" id="CHEBI:18420"/>
    </ligand>
</feature>
<evidence type="ECO:0000255" key="1">
    <source>
        <dbReference type="HAMAP-Rule" id="MF_01595"/>
    </source>
</evidence>
<evidence type="ECO:0000256" key="2">
    <source>
        <dbReference type="SAM" id="MobiDB-lite"/>
    </source>
</evidence>
<proteinExistence type="inferred from homology"/>
<protein>
    <recommendedName>
        <fullName evidence="1">Polyribonucleotide nucleotidyltransferase</fullName>
        <ecNumber evidence="1">2.7.7.8</ecNumber>
    </recommendedName>
    <alternativeName>
        <fullName evidence="1">Polynucleotide phosphorylase</fullName>
        <shortName evidence="1">PNPase</shortName>
    </alternativeName>
</protein>
<sequence length="749" mass="82118">MFNEITKSVTWNGQVLELSTGKIARQADGAVTVKMGNSVLLCTAVVANKAKEGIGFLPLTINYREMAYAAGKIPGGFFKHEGKASDREVLVSRLIDRPIRPLFHPAFVNETHVTCSVLSYDPETPVDILAIIGASAALSLSPAPYLEIVAASKVGLINGEFVLNPTLALLKTSQLDLVVAGTSDSVMMVESEAHLLSEEQMLEAVKFGFESFQPVIKIIKELAEEAKKPKLEMQALYPASLKKEIEKLFVKEIEQAFAIKSKQERSTNLDLIPEKVLTHFVSDIENKKYSNYQIESALKAIESDILRNEILEKNRRIDGRSTTDIRQIACEIGLLPSAHGSALFTRGETQSLVSTTFGTSLDEQIVDSLEGEYKERFMLNYIFPPYSVNEAMPMKAPSRREVGHGKLAWRAINPILPNKVQFPYSIRVVAETTESNGSSSMATVCGSSLALMYAGVPIKAPVAGIAMGLVKEGKNFAVLSDILGDEDYFGDMDFKVAGTSEGITALQMDIKISGVDFKIMKVALEQARLGRLHILEQMNKVISKPNNELSKNAPSTTTIKIDKDKIRDIIGPGGKIIKEICETSGAKIDISDDGTVSVYASDRDKLKVALDKIKAIVVEPEIGEIFNGTVVKVLDSGAFINYVGNKDGFVHISEVSGERIETVSSVLKQGDIVKVKLIGFDNKGKAKLTIKNADKDKSSNNTKPKTNVNNTNKDNSEPEQRRDSSKKRAWNEDNNAETAEVITERKYFN</sequence>
<gene>
    <name evidence="1" type="primary">pnp</name>
    <name type="ordered locus">RC0663</name>
</gene>